<keyword id="KW-0010">Activator</keyword>
<keyword id="KW-0963">Cytoplasm</keyword>
<keyword id="KW-1185">Reference proteome</keyword>
<keyword id="KW-0678">Repressor</keyword>
<keyword id="KW-0694">RNA-binding</keyword>
<keyword id="KW-0810">Translation regulation</keyword>
<protein>
    <recommendedName>
        <fullName evidence="1">Translational regulator CsrA</fullName>
    </recommendedName>
    <alternativeName>
        <fullName evidence="1">Carbon storage regulator</fullName>
    </alternativeName>
</protein>
<reference key="1">
    <citation type="journal article" date="2001" name="Proc. Natl. Acad. Sci. U.S.A.">
        <title>Complete genomic sequence of Pasteurella multocida Pm70.</title>
        <authorList>
            <person name="May B.J."/>
            <person name="Zhang Q."/>
            <person name="Li L.L."/>
            <person name="Paustian M.L."/>
            <person name="Whittam T.S."/>
            <person name="Kapur V."/>
        </authorList>
    </citation>
    <scope>NUCLEOTIDE SEQUENCE [LARGE SCALE GENOMIC DNA]</scope>
    <source>
        <strain>Pm70</strain>
    </source>
</reference>
<sequence>MLILTRKVGESLLIGDDISITILNIRGNQVKIGIKAPKDVSVHREEIYQRIKQALEAPHVGE</sequence>
<accession>P57934</accession>
<gene>
    <name evidence="1" type="primary">csrA</name>
    <name type="ordered locus">PM1288</name>
</gene>
<proteinExistence type="inferred from homology"/>
<feature type="chain" id="PRO_0000177076" description="Translational regulator CsrA">
    <location>
        <begin position="1"/>
        <end position="62"/>
    </location>
</feature>
<organism>
    <name type="scientific">Pasteurella multocida (strain Pm70)</name>
    <dbReference type="NCBI Taxonomy" id="272843"/>
    <lineage>
        <taxon>Bacteria</taxon>
        <taxon>Pseudomonadati</taxon>
        <taxon>Pseudomonadota</taxon>
        <taxon>Gammaproteobacteria</taxon>
        <taxon>Pasteurellales</taxon>
        <taxon>Pasteurellaceae</taxon>
        <taxon>Pasteurella</taxon>
    </lineage>
</organism>
<evidence type="ECO:0000255" key="1">
    <source>
        <dbReference type="HAMAP-Rule" id="MF_00167"/>
    </source>
</evidence>
<name>CSRA_PASMU</name>
<dbReference type="EMBL" id="AE004439">
    <property type="protein sequence ID" value="AAK03372.1"/>
    <property type="molecule type" value="Genomic_DNA"/>
</dbReference>
<dbReference type="RefSeq" id="WP_005717766.1">
    <property type="nucleotide sequence ID" value="NC_002663.1"/>
</dbReference>
<dbReference type="SMR" id="P57934"/>
<dbReference type="STRING" id="272843.PM1288"/>
<dbReference type="EnsemblBacteria" id="AAK03372">
    <property type="protein sequence ID" value="AAK03372"/>
    <property type="gene ID" value="PM1288"/>
</dbReference>
<dbReference type="KEGG" id="pmu:PM1288"/>
<dbReference type="HOGENOM" id="CLU_164837_2_1_6"/>
<dbReference type="OrthoDB" id="9809061at2"/>
<dbReference type="Proteomes" id="UP000000809">
    <property type="component" value="Chromosome"/>
</dbReference>
<dbReference type="GO" id="GO:0005829">
    <property type="term" value="C:cytosol"/>
    <property type="evidence" value="ECO:0007669"/>
    <property type="project" value="TreeGrafter"/>
</dbReference>
<dbReference type="GO" id="GO:0048027">
    <property type="term" value="F:mRNA 5'-UTR binding"/>
    <property type="evidence" value="ECO:0007669"/>
    <property type="project" value="UniProtKB-UniRule"/>
</dbReference>
<dbReference type="GO" id="GO:0006402">
    <property type="term" value="P:mRNA catabolic process"/>
    <property type="evidence" value="ECO:0007669"/>
    <property type="project" value="InterPro"/>
</dbReference>
<dbReference type="GO" id="GO:0045947">
    <property type="term" value="P:negative regulation of translational initiation"/>
    <property type="evidence" value="ECO:0007669"/>
    <property type="project" value="UniProtKB-UniRule"/>
</dbReference>
<dbReference type="GO" id="GO:0045948">
    <property type="term" value="P:positive regulation of translational initiation"/>
    <property type="evidence" value="ECO:0007669"/>
    <property type="project" value="UniProtKB-UniRule"/>
</dbReference>
<dbReference type="GO" id="GO:0006109">
    <property type="term" value="P:regulation of carbohydrate metabolic process"/>
    <property type="evidence" value="ECO:0007669"/>
    <property type="project" value="UniProtKB-UniRule"/>
</dbReference>
<dbReference type="FunFam" id="2.60.40.4380:FF:000001">
    <property type="entry name" value="Translational regulator CsrA"/>
    <property type="match status" value="1"/>
</dbReference>
<dbReference type="Gene3D" id="2.60.40.4380">
    <property type="entry name" value="Translational regulator CsrA"/>
    <property type="match status" value="1"/>
</dbReference>
<dbReference type="HAMAP" id="MF_00167">
    <property type="entry name" value="CsrA"/>
    <property type="match status" value="1"/>
</dbReference>
<dbReference type="InterPro" id="IPR003751">
    <property type="entry name" value="CsrA"/>
</dbReference>
<dbReference type="InterPro" id="IPR036107">
    <property type="entry name" value="CsrA_sf"/>
</dbReference>
<dbReference type="NCBIfam" id="TIGR00202">
    <property type="entry name" value="csrA"/>
    <property type="match status" value="1"/>
</dbReference>
<dbReference type="NCBIfam" id="NF002469">
    <property type="entry name" value="PRK01712.1"/>
    <property type="match status" value="1"/>
</dbReference>
<dbReference type="PANTHER" id="PTHR34984">
    <property type="entry name" value="CARBON STORAGE REGULATOR"/>
    <property type="match status" value="1"/>
</dbReference>
<dbReference type="PANTHER" id="PTHR34984:SF1">
    <property type="entry name" value="CARBON STORAGE REGULATOR"/>
    <property type="match status" value="1"/>
</dbReference>
<dbReference type="Pfam" id="PF02599">
    <property type="entry name" value="CsrA"/>
    <property type="match status" value="1"/>
</dbReference>
<dbReference type="SUPFAM" id="SSF117130">
    <property type="entry name" value="CsrA-like"/>
    <property type="match status" value="1"/>
</dbReference>
<comment type="function">
    <text evidence="1">A key translational regulator that binds mRNA to regulate translation initiation and/or mRNA stability. Mediates global changes in gene expression, shifting from rapid growth to stress survival by linking envelope stress, the stringent response and the catabolite repression systems. Usually binds in the 5'-UTR; binding at or near the Shine-Dalgarno sequence prevents ribosome-binding, repressing translation, binding elsewhere in the 5'-UTR can activate translation and/or stabilize the mRNA. Its function is antagonized by small RNA(s).</text>
</comment>
<comment type="subunit">
    <text evidence="1">Homodimer; the beta-strands of each monomer intercalate to form a hydrophobic core, while the alpha-helices form wings that extend away from the core.</text>
</comment>
<comment type="subcellular location">
    <subcellularLocation>
        <location evidence="1">Cytoplasm</location>
    </subcellularLocation>
</comment>
<comment type="similarity">
    <text evidence="1">Belongs to the CsrA/RsmA family.</text>
</comment>